<reference key="1">
    <citation type="journal article" date="1994" name="Nature">
        <title>2.2 Mb of contiguous nucleotide sequence from chromosome III of C. elegans.</title>
        <authorList>
            <person name="Wilson R."/>
            <person name="Ainscough R."/>
            <person name="Anderson K."/>
            <person name="Baynes C."/>
            <person name="Berks M."/>
            <person name="Bonfield J."/>
            <person name="Burton J."/>
            <person name="Connell M."/>
            <person name="Copsey T."/>
            <person name="Cooper J."/>
            <person name="Coulson A."/>
            <person name="Craxton M."/>
            <person name="Dear S."/>
            <person name="Du Z."/>
            <person name="Durbin R."/>
            <person name="Favello A."/>
            <person name="Fraser A."/>
            <person name="Fulton L."/>
            <person name="Gardner A."/>
            <person name="Green P."/>
            <person name="Hawkins T."/>
            <person name="Hillier L."/>
            <person name="Jier M."/>
            <person name="Johnston L."/>
            <person name="Jones M."/>
            <person name="Kershaw J."/>
            <person name="Kirsten J."/>
            <person name="Laisster N."/>
            <person name="Latreille P."/>
            <person name="Lightning J."/>
            <person name="Lloyd C."/>
            <person name="Mortimore B."/>
            <person name="O'Callaghan M."/>
            <person name="Parsons J."/>
            <person name="Percy C."/>
            <person name="Rifken L."/>
            <person name="Roopra A."/>
            <person name="Saunders D."/>
            <person name="Shownkeen R."/>
            <person name="Sims M."/>
            <person name="Smaldon N."/>
            <person name="Smith A."/>
            <person name="Smith M."/>
            <person name="Sonnhammer E."/>
            <person name="Staden R."/>
            <person name="Sulston J."/>
            <person name="Thierry-Mieg J."/>
            <person name="Thomas K."/>
            <person name="Vaudin M."/>
            <person name="Vaughan K."/>
            <person name="Waterston R."/>
            <person name="Watson A."/>
            <person name="Weinstock L."/>
            <person name="Wilkinson-Sproat J."/>
            <person name="Wohldman P."/>
        </authorList>
    </citation>
    <scope>NUCLEOTIDE SEQUENCE [LARGE SCALE GENOMIC DNA]</scope>
    <source>
        <strain>Bristol N2</strain>
    </source>
</reference>
<reference key="2">
    <citation type="journal article" date="1998" name="Science">
        <title>Genome sequence of the nematode C. elegans: a platform for investigating biology.</title>
        <authorList>
            <consortium name="The C. elegans sequencing consortium"/>
        </authorList>
    </citation>
    <scope>NUCLEOTIDE SEQUENCE [LARGE SCALE GENOMIC DNA]</scope>
    <source>
        <strain>Bristol N2</strain>
    </source>
</reference>
<organism>
    <name type="scientific">Caenorhabditis elegans</name>
    <dbReference type="NCBI Taxonomy" id="6239"/>
    <lineage>
        <taxon>Eukaryota</taxon>
        <taxon>Metazoa</taxon>
        <taxon>Ecdysozoa</taxon>
        <taxon>Nematoda</taxon>
        <taxon>Chromadorea</taxon>
        <taxon>Rhabditida</taxon>
        <taxon>Rhabditina</taxon>
        <taxon>Rhabditomorpha</taxon>
        <taxon>Rhabditoidea</taxon>
        <taxon>Rhabditidae</taxon>
        <taxon>Peloderinae</taxon>
        <taxon>Caenorhabditis</taxon>
    </lineage>
</organism>
<keyword id="KW-0176">Collagen</keyword>
<keyword id="KW-0193">Cuticle</keyword>
<keyword id="KW-1015">Disulfide bond</keyword>
<keyword id="KW-1185">Reference proteome</keyword>
<keyword id="KW-0677">Repeat</keyword>
<name>COL90_CAEEL</name>
<feature type="chain" id="PRO_0000127602" description="Putative cuticle collagen 90">
    <location>
        <begin position="1"/>
        <end position="305"/>
    </location>
</feature>
<feature type="region of interest" description="Disordered" evidence="2">
    <location>
        <begin position="95"/>
        <end position="117"/>
    </location>
</feature>
<feature type="region of interest" description="Triple-helical region">
    <location>
        <begin position="96"/>
        <end position="125"/>
    </location>
</feature>
<feature type="region of interest" description="Triple-helical region">
    <location>
        <begin position="142"/>
        <end position="204"/>
    </location>
</feature>
<feature type="region of interest" description="Disordered" evidence="2">
    <location>
        <begin position="146"/>
        <end position="305"/>
    </location>
</feature>
<feature type="region of interest" description="Triple-helical region">
    <location>
        <begin position="208"/>
        <end position="252"/>
    </location>
</feature>
<feature type="region of interest" description="Triple-helical region">
    <location>
        <begin position="256"/>
        <end position="270"/>
    </location>
</feature>
<feature type="compositionally biased region" description="Low complexity" evidence="2">
    <location>
        <begin position="150"/>
        <end position="162"/>
    </location>
</feature>
<feature type="compositionally biased region" description="Basic and acidic residues" evidence="2">
    <location>
        <begin position="278"/>
        <end position="288"/>
    </location>
</feature>
<proteinExistence type="inferred from homology"/>
<comment type="function">
    <text evidence="1">Nematode cuticles are composed largely of collagen-like proteins. The cuticle functions both as an exoskeleton and as a barrier to protect the worm from its environment (By similarity).</text>
</comment>
<comment type="subunit">
    <text evidence="1">Collagen polypeptide chains are complexed within the cuticle by disulfide bonds and other types of covalent cross-links.</text>
</comment>
<comment type="similarity">
    <text evidence="3">Belongs to the cuticular collagen family.</text>
</comment>
<accession>P34340</accession>
<dbReference type="EMBL" id="FO080706">
    <property type="protein sequence ID" value="CCD66002.1"/>
    <property type="molecule type" value="Genomic_DNA"/>
</dbReference>
<dbReference type="PIR" id="S44767">
    <property type="entry name" value="S44767"/>
</dbReference>
<dbReference type="RefSeq" id="NP_498729.1">
    <property type="nucleotide sequence ID" value="NM_066328.6"/>
</dbReference>
<dbReference type="SMR" id="P34340"/>
<dbReference type="BioGRID" id="41324">
    <property type="interactions" value="3"/>
</dbReference>
<dbReference type="DIP" id="DIP-25368N"/>
<dbReference type="FunCoup" id="P34340">
    <property type="interactions" value="450"/>
</dbReference>
<dbReference type="IntAct" id="P34340">
    <property type="interactions" value="1"/>
</dbReference>
<dbReference type="STRING" id="6239.C29E4.1.1"/>
<dbReference type="PaxDb" id="6239-C29E4.1"/>
<dbReference type="PeptideAtlas" id="P34340"/>
<dbReference type="EnsemblMetazoa" id="C29E4.1.1">
    <property type="protein sequence ID" value="C29E4.1.1"/>
    <property type="gene ID" value="WBGene00000665"/>
</dbReference>
<dbReference type="GeneID" id="176117"/>
<dbReference type="KEGG" id="cel:CELE_C29E4.1"/>
<dbReference type="UCSC" id="C29E4.1">
    <property type="organism name" value="c. elegans"/>
</dbReference>
<dbReference type="AGR" id="WB:WBGene00000665"/>
<dbReference type="CTD" id="176117"/>
<dbReference type="WormBase" id="C29E4.1">
    <property type="protein sequence ID" value="CE00083"/>
    <property type="gene ID" value="WBGene00000665"/>
    <property type="gene designation" value="col-90"/>
</dbReference>
<dbReference type="eggNOG" id="KOG3544">
    <property type="taxonomic scope" value="Eukaryota"/>
</dbReference>
<dbReference type="HOGENOM" id="CLU_001074_4_3_1"/>
<dbReference type="InParanoid" id="P34340"/>
<dbReference type="OMA" id="MPGTAYF"/>
<dbReference type="OrthoDB" id="5983381at2759"/>
<dbReference type="PhylomeDB" id="P34340"/>
<dbReference type="PRO" id="PR:P34340"/>
<dbReference type="Proteomes" id="UP000001940">
    <property type="component" value="Chromosome III"/>
</dbReference>
<dbReference type="Bgee" id="WBGene00000665">
    <property type="expression patterns" value="Expressed in larva and 1 other cell type or tissue"/>
</dbReference>
<dbReference type="GO" id="GO:0005581">
    <property type="term" value="C:collagen trimer"/>
    <property type="evidence" value="ECO:0007669"/>
    <property type="project" value="UniProtKB-KW"/>
</dbReference>
<dbReference type="GO" id="GO:0042302">
    <property type="term" value="F:structural constituent of cuticle"/>
    <property type="evidence" value="ECO:0007669"/>
    <property type="project" value="UniProtKB-KW"/>
</dbReference>
<dbReference type="InterPro" id="IPR002486">
    <property type="entry name" value="Col_cuticle_N"/>
</dbReference>
<dbReference type="PANTHER" id="PTHR24637">
    <property type="entry name" value="COLLAGEN"/>
    <property type="match status" value="1"/>
</dbReference>
<dbReference type="PANTHER" id="PTHR24637:SF384">
    <property type="entry name" value="CUTICLE COLLAGEN 90-RELATED"/>
    <property type="match status" value="1"/>
</dbReference>
<dbReference type="Pfam" id="PF01484">
    <property type="entry name" value="Col_cuticle_N"/>
    <property type="match status" value="1"/>
</dbReference>
<dbReference type="SMART" id="SM01088">
    <property type="entry name" value="Col_cuticle_N"/>
    <property type="match status" value="1"/>
</dbReference>
<protein>
    <recommendedName>
        <fullName>Putative cuticle collagen 90</fullName>
    </recommendedName>
</protein>
<sequence>MSTIGYIGASICLLGVLSSLFSISHIVRDINSLRDEVEGRVDEFKVLADDTWQRLLVLQSPTGETENVMPSIFRSKRFVYPGMCNCDSNSQGCPAGPPGPPGLPGKRGDEGVVGDLGRSGASGISLAAVHHIPGGCINCPAGPAGPPGQQGPVGPQGFPGVVGTCGPSGDDGQPGPAGPLGDKGAQGPKGFDGADGPDGMPGTAYFPGAVGQPGEPGWLGQPGLPGKHGEPGQDGEEGPKGAPGTPGSNGRDAYPGQPGKAGEPGAVGKDANYCPCPARRDSKTESVHEPPAASQNGGYRKAKRH</sequence>
<gene>
    <name type="primary">col-90</name>
    <name type="ORF">C29E4.1</name>
</gene>
<evidence type="ECO:0000250" key="1"/>
<evidence type="ECO:0000256" key="2">
    <source>
        <dbReference type="SAM" id="MobiDB-lite"/>
    </source>
</evidence>
<evidence type="ECO:0000305" key="3"/>